<protein>
    <recommendedName>
        <fullName>Protein FAM81B</fullName>
    </recommendedName>
</protein>
<proteinExistence type="evidence at protein level"/>
<evidence type="ECO:0000255" key="1"/>
<evidence type="ECO:0000256" key="2">
    <source>
        <dbReference type="SAM" id="MobiDB-lite"/>
    </source>
</evidence>
<evidence type="ECO:0000305" key="3"/>
<name>FA81B_HUMAN</name>
<reference key="1">
    <citation type="journal article" date="2004" name="Nat. Genet.">
        <title>Complete sequencing and characterization of 21,243 full-length human cDNAs.</title>
        <authorList>
            <person name="Ota T."/>
            <person name="Suzuki Y."/>
            <person name="Nishikawa T."/>
            <person name="Otsuki T."/>
            <person name="Sugiyama T."/>
            <person name="Irie R."/>
            <person name="Wakamatsu A."/>
            <person name="Hayashi K."/>
            <person name="Sato H."/>
            <person name="Nagai K."/>
            <person name="Kimura K."/>
            <person name="Makita H."/>
            <person name="Sekine M."/>
            <person name="Obayashi M."/>
            <person name="Nishi T."/>
            <person name="Shibahara T."/>
            <person name="Tanaka T."/>
            <person name="Ishii S."/>
            <person name="Yamamoto J."/>
            <person name="Saito K."/>
            <person name="Kawai Y."/>
            <person name="Isono Y."/>
            <person name="Nakamura Y."/>
            <person name="Nagahari K."/>
            <person name="Murakami K."/>
            <person name="Yasuda T."/>
            <person name="Iwayanagi T."/>
            <person name="Wagatsuma M."/>
            <person name="Shiratori A."/>
            <person name="Sudo H."/>
            <person name="Hosoiri T."/>
            <person name="Kaku Y."/>
            <person name="Kodaira H."/>
            <person name="Kondo H."/>
            <person name="Sugawara M."/>
            <person name="Takahashi M."/>
            <person name="Kanda K."/>
            <person name="Yokoi T."/>
            <person name="Furuya T."/>
            <person name="Kikkawa E."/>
            <person name="Omura Y."/>
            <person name="Abe K."/>
            <person name="Kamihara K."/>
            <person name="Katsuta N."/>
            <person name="Sato K."/>
            <person name="Tanikawa M."/>
            <person name="Yamazaki M."/>
            <person name="Ninomiya K."/>
            <person name="Ishibashi T."/>
            <person name="Yamashita H."/>
            <person name="Murakawa K."/>
            <person name="Fujimori K."/>
            <person name="Tanai H."/>
            <person name="Kimata M."/>
            <person name="Watanabe M."/>
            <person name="Hiraoka S."/>
            <person name="Chiba Y."/>
            <person name="Ishida S."/>
            <person name="Ono Y."/>
            <person name="Takiguchi S."/>
            <person name="Watanabe S."/>
            <person name="Yosida M."/>
            <person name="Hotuta T."/>
            <person name="Kusano J."/>
            <person name="Kanehori K."/>
            <person name="Takahashi-Fujii A."/>
            <person name="Hara H."/>
            <person name="Tanase T.-O."/>
            <person name="Nomura Y."/>
            <person name="Togiya S."/>
            <person name="Komai F."/>
            <person name="Hara R."/>
            <person name="Takeuchi K."/>
            <person name="Arita M."/>
            <person name="Imose N."/>
            <person name="Musashino K."/>
            <person name="Yuuki H."/>
            <person name="Oshima A."/>
            <person name="Sasaki N."/>
            <person name="Aotsuka S."/>
            <person name="Yoshikawa Y."/>
            <person name="Matsunawa H."/>
            <person name="Ichihara T."/>
            <person name="Shiohata N."/>
            <person name="Sano S."/>
            <person name="Moriya S."/>
            <person name="Momiyama H."/>
            <person name="Satoh N."/>
            <person name="Takami S."/>
            <person name="Terashima Y."/>
            <person name="Suzuki O."/>
            <person name="Nakagawa S."/>
            <person name="Senoh A."/>
            <person name="Mizoguchi H."/>
            <person name="Goto Y."/>
            <person name="Shimizu F."/>
            <person name="Wakebe H."/>
            <person name="Hishigaki H."/>
            <person name="Watanabe T."/>
            <person name="Sugiyama A."/>
            <person name="Takemoto M."/>
            <person name="Kawakami B."/>
            <person name="Yamazaki M."/>
            <person name="Watanabe K."/>
            <person name="Kumagai A."/>
            <person name="Itakura S."/>
            <person name="Fukuzumi Y."/>
            <person name="Fujimori Y."/>
            <person name="Komiyama M."/>
            <person name="Tashiro H."/>
            <person name="Tanigami A."/>
            <person name="Fujiwara T."/>
            <person name="Ono T."/>
            <person name="Yamada K."/>
            <person name="Fujii Y."/>
            <person name="Ozaki K."/>
            <person name="Hirao M."/>
            <person name="Ohmori Y."/>
            <person name="Kawabata A."/>
            <person name="Hikiji T."/>
            <person name="Kobatake N."/>
            <person name="Inagaki H."/>
            <person name="Ikema Y."/>
            <person name="Okamoto S."/>
            <person name="Okitani R."/>
            <person name="Kawakami T."/>
            <person name="Noguchi S."/>
            <person name="Itoh T."/>
            <person name="Shigeta K."/>
            <person name="Senba T."/>
            <person name="Matsumura K."/>
            <person name="Nakajima Y."/>
            <person name="Mizuno T."/>
            <person name="Morinaga M."/>
            <person name="Sasaki M."/>
            <person name="Togashi T."/>
            <person name="Oyama M."/>
            <person name="Hata H."/>
            <person name="Watanabe M."/>
            <person name="Komatsu T."/>
            <person name="Mizushima-Sugano J."/>
            <person name="Satoh T."/>
            <person name="Shirai Y."/>
            <person name="Takahashi Y."/>
            <person name="Nakagawa K."/>
            <person name="Okumura K."/>
            <person name="Nagase T."/>
            <person name="Nomura N."/>
            <person name="Kikuchi H."/>
            <person name="Masuho Y."/>
            <person name="Yamashita R."/>
            <person name="Nakai K."/>
            <person name="Yada T."/>
            <person name="Nakamura Y."/>
            <person name="Ohara O."/>
            <person name="Isogai T."/>
            <person name="Sugano S."/>
        </authorList>
    </citation>
    <scope>NUCLEOTIDE SEQUENCE [LARGE SCALE MRNA]</scope>
    <source>
        <tissue>Testis</tissue>
    </source>
</reference>
<reference key="2">
    <citation type="journal article" date="2004" name="Nature">
        <title>The DNA sequence and comparative analysis of human chromosome 5.</title>
        <authorList>
            <person name="Schmutz J."/>
            <person name="Martin J."/>
            <person name="Terry A."/>
            <person name="Couronne O."/>
            <person name="Grimwood J."/>
            <person name="Lowry S."/>
            <person name="Gordon L.A."/>
            <person name="Scott D."/>
            <person name="Xie G."/>
            <person name="Huang W."/>
            <person name="Hellsten U."/>
            <person name="Tran-Gyamfi M."/>
            <person name="She X."/>
            <person name="Prabhakar S."/>
            <person name="Aerts A."/>
            <person name="Altherr M."/>
            <person name="Bajorek E."/>
            <person name="Black S."/>
            <person name="Branscomb E."/>
            <person name="Caoile C."/>
            <person name="Challacombe J.F."/>
            <person name="Chan Y.M."/>
            <person name="Denys M."/>
            <person name="Detter J.C."/>
            <person name="Escobar J."/>
            <person name="Flowers D."/>
            <person name="Fotopulos D."/>
            <person name="Glavina T."/>
            <person name="Gomez M."/>
            <person name="Gonzales E."/>
            <person name="Goodstein D."/>
            <person name="Grigoriev I."/>
            <person name="Groza M."/>
            <person name="Hammon N."/>
            <person name="Hawkins T."/>
            <person name="Haydu L."/>
            <person name="Israni S."/>
            <person name="Jett J."/>
            <person name="Kadner K."/>
            <person name="Kimball H."/>
            <person name="Kobayashi A."/>
            <person name="Lopez F."/>
            <person name="Lou Y."/>
            <person name="Martinez D."/>
            <person name="Medina C."/>
            <person name="Morgan J."/>
            <person name="Nandkeshwar R."/>
            <person name="Noonan J.P."/>
            <person name="Pitluck S."/>
            <person name="Pollard M."/>
            <person name="Predki P."/>
            <person name="Priest J."/>
            <person name="Ramirez L."/>
            <person name="Retterer J."/>
            <person name="Rodriguez A."/>
            <person name="Rogers S."/>
            <person name="Salamov A."/>
            <person name="Salazar A."/>
            <person name="Thayer N."/>
            <person name="Tice H."/>
            <person name="Tsai M."/>
            <person name="Ustaszewska A."/>
            <person name="Vo N."/>
            <person name="Wheeler J."/>
            <person name="Wu K."/>
            <person name="Yang J."/>
            <person name="Dickson M."/>
            <person name="Cheng J.-F."/>
            <person name="Eichler E.E."/>
            <person name="Olsen A."/>
            <person name="Pennacchio L.A."/>
            <person name="Rokhsar D.S."/>
            <person name="Richardson P."/>
            <person name="Lucas S.M."/>
            <person name="Myers R.M."/>
            <person name="Rubin E.M."/>
        </authorList>
    </citation>
    <scope>NUCLEOTIDE SEQUENCE [LARGE SCALE GENOMIC DNA]</scope>
</reference>
<reference key="3">
    <citation type="journal article" date="2004" name="Genome Res.">
        <title>The status, quality, and expansion of the NIH full-length cDNA project: the Mammalian Gene Collection (MGC).</title>
        <authorList>
            <consortium name="The MGC Project Team"/>
        </authorList>
    </citation>
    <scope>NUCLEOTIDE SEQUENCE [LARGE SCALE MRNA]</scope>
    <source>
        <tissue>Brain</tissue>
    </source>
</reference>
<feature type="chain" id="PRO_0000265122" description="Protein FAM81B">
    <location>
        <begin position="1"/>
        <end position="452"/>
    </location>
</feature>
<feature type="region of interest" description="Disordered" evidence="2">
    <location>
        <begin position="1"/>
        <end position="85"/>
    </location>
</feature>
<feature type="coiled-coil region" evidence="1">
    <location>
        <begin position="164"/>
        <end position="192"/>
    </location>
</feature>
<feature type="coiled-coil region" evidence="1">
    <location>
        <begin position="329"/>
        <end position="452"/>
    </location>
</feature>
<feature type="compositionally biased region" description="Polar residues" evidence="2">
    <location>
        <begin position="1"/>
        <end position="11"/>
    </location>
</feature>
<feature type="compositionally biased region" description="Polar residues" evidence="2">
    <location>
        <begin position="38"/>
        <end position="55"/>
    </location>
</feature>
<feature type="sequence variant" id="VAR_057968" description="In dbSNP:rs10042271.">
    <original>R</original>
    <variation>G</variation>
    <location>
        <position position="150"/>
    </location>
</feature>
<feature type="sequence variant" id="VAR_057969" description="In dbSNP:rs11555275.">
    <original>A</original>
    <variation>V</variation>
    <location>
        <position position="187"/>
    </location>
</feature>
<feature type="sequence variant" id="VAR_057970" description="In dbSNP:rs1541797.">
    <original>R</original>
    <variation>Q</variation>
    <location>
        <position position="239"/>
    </location>
</feature>
<feature type="sequence variant" id="VAR_057971" description="In dbSNP:rs6878669.">
    <original>S</original>
    <variation>P</variation>
    <location>
        <position position="275"/>
    </location>
</feature>
<dbReference type="EMBL" id="AK058062">
    <property type="protein sequence ID" value="BAB71646.1"/>
    <property type="status" value="ALT_FRAME"/>
    <property type="molecule type" value="mRNA"/>
</dbReference>
<dbReference type="EMBL" id="AC008573">
    <property type="status" value="NOT_ANNOTATED_CDS"/>
    <property type="molecule type" value="Genomic_DNA"/>
</dbReference>
<dbReference type="EMBL" id="AC090071">
    <property type="status" value="NOT_ANNOTATED_CDS"/>
    <property type="molecule type" value="Genomic_DNA"/>
</dbReference>
<dbReference type="EMBL" id="BC034772">
    <property type="protein sequence ID" value="AAH34772.1"/>
    <property type="status" value="ALT_INIT"/>
    <property type="molecule type" value="mRNA"/>
</dbReference>
<dbReference type="CCDS" id="CCDS43341.1"/>
<dbReference type="RefSeq" id="NP_689761.2">
    <property type="nucleotide sequence ID" value="NM_152548.3"/>
</dbReference>
<dbReference type="SMR" id="Q96LP2"/>
<dbReference type="BioGRID" id="127508">
    <property type="interactions" value="19"/>
</dbReference>
<dbReference type="FunCoup" id="Q96LP2">
    <property type="interactions" value="245"/>
</dbReference>
<dbReference type="IntAct" id="Q96LP2">
    <property type="interactions" value="15"/>
</dbReference>
<dbReference type="STRING" id="9606.ENSP00000283357"/>
<dbReference type="iPTMnet" id="Q96LP2"/>
<dbReference type="PhosphoSitePlus" id="Q96LP2"/>
<dbReference type="BioMuta" id="FAM81B"/>
<dbReference type="DMDM" id="296439348"/>
<dbReference type="jPOST" id="Q96LP2"/>
<dbReference type="MassIVE" id="Q96LP2"/>
<dbReference type="PaxDb" id="9606-ENSP00000283357"/>
<dbReference type="PeptideAtlas" id="Q96LP2"/>
<dbReference type="ProteomicsDB" id="77230"/>
<dbReference type="Antibodypedia" id="54483">
    <property type="antibodies" value="42 antibodies from 16 providers"/>
</dbReference>
<dbReference type="DNASU" id="153643"/>
<dbReference type="Ensembl" id="ENST00000283357.10">
    <property type="protein sequence ID" value="ENSP00000283357.5"/>
    <property type="gene ID" value="ENSG00000153347.10"/>
</dbReference>
<dbReference type="GeneID" id="153643"/>
<dbReference type="KEGG" id="hsa:153643"/>
<dbReference type="MANE-Select" id="ENST00000283357.10">
    <property type="protein sequence ID" value="ENSP00000283357.5"/>
    <property type="RefSeq nucleotide sequence ID" value="NM_152548.3"/>
    <property type="RefSeq protein sequence ID" value="NP_689761.2"/>
</dbReference>
<dbReference type="UCSC" id="uc003kla.2">
    <property type="organism name" value="human"/>
</dbReference>
<dbReference type="AGR" id="HGNC:26335"/>
<dbReference type="CTD" id="153643"/>
<dbReference type="DisGeNET" id="153643"/>
<dbReference type="GeneCards" id="FAM81B"/>
<dbReference type="HGNC" id="HGNC:26335">
    <property type="gene designation" value="FAM81B"/>
</dbReference>
<dbReference type="HPA" id="ENSG00000153347">
    <property type="expression patterns" value="Group enriched (choroid plexus, fallopian tube, testis)"/>
</dbReference>
<dbReference type="neXtProt" id="NX_Q96LP2"/>
<dbReference type="OpenTargets" id="ENSG00000153347"/>
<dbReference type="PharmGKB" id="PA142671847"/>
<dbReference type="VEuPathDB" id="HostDB:ENSG00000153347"/>
<dbReference type="eggNOG" id="ENOG502QPWB">
    <property type="taxonomic scope" value="Eukaryota"/>
</dbReference>
<dbReference type="GeneTree" id="ENSGT00390000004985"/>
<dbReference type="HOGENOM" id="CLU_056304_0_0_1"/>
<dbReference type="InParanoid" id="Q96LP2"/>
<dbReference type="OMA" id="NHQKWTE"/>
<dbReference type="OrthoDB" id="10014002at2759"/>
<dbReference type="PAN-GO" id="Q96LP2">
    <property type="GO annotations" value="0 GO annotations based on evolutionary models"/>
</dbReference>
<dbReference type="PhylomeDB" id="Q96LP2"/>
<dbReference type="TreeFam" id="TF335682"/>
<dbReference type="PathwayCommons" id="Q96LP2"/>
<dbReference type="SignaLink" id="Q96LP2"/>
<dbReference type="BioGRID-ORCS" id="153643">
    <property type="hits" value="7 hits in 1147 CRISPR screens"/>
</dbReference>
<dbReference type="ChiTaRS" id="FAM81B">
    <property type="organism name" value="human"/>
</dbReference>
<dbReference type="GenomeRNAi" id="153643"/>
<dbReference type="Pharos" id="Q96LP2">
    <property type="development level" value="Tdark"/>
</dbReference>
<dbReference type="PRO" id="PR:Q96LP2"/>
<dbReference type="Proteomes" id="UP000005640">
    <property type="component" value="Chromosome 5"/>
</dbReference>
<dbReference type="RNAct" id="Q96LP2">
    <property type="molecule type" value="protein"/>
</dbReference>
<dbReference type="Bgee" id="ENSG00000153347">
    <property type="expression patterns" value="Expressed in bronchial epithelial cell and 125 other cell types or tissues"/>
</dbReference>
<dbReference type="ExpressionAtlas" id="Q96LP2">
    <property type="expression patterns" value="baseline and differential"/>
</dbReference>
<dbReference type="GO" id="GO:0005634">
    <property type="term" value="C:nucleus"/>
    <property type="evidence" value="ECO:0007005"/>
    <property type="project" value="UniProtKB"/>
</dbReference>
<dbReference type="InterPro" id="IPR029619">
    <property type="entry name" value="FAM81"/>
</dbReference>
<dbReference type="PANTHER" id="PTHR22420">
    <property type="entry name" value="PROTEIN FAM81A"/>
    <property type="match status" value="1"/>
</dbReference>
<dbReference type="PANTHER" id="PTHR22420:SF5">
    <property type="entry name" value="PROTEIN FAM81B"/>
    <property type="match status" value="1"/>
</dbReference>
<gene>
    <name type="primary">FAM81B</name>
</gene>
<accession>Q96LP2</accession>
<comment type="interaction">
    <interactant intactId="EBI-10290827">
        <id>Q96LP2</id>
    </interactant>
    <interactant intactId="EBI-9091197">
        <id>Q8IY31-3</id>
        <label>IFT20</label>
    </interactant>
    <organismsDiffer>false</organismsDiffer>
    <experiments>3</experiments>
</comment>
<comment type="interaction">
    <interactant intactId="EBI-10290827">
        <id>Q96LP2</id>
    </interactant>
    <interactant intactId="EBI-1216080">
        <id>Q9Y250</id>
        <label>LZTS1</label>
    </interactant>
    <organismsDiffer>false</organismsDiffer>
    <experiments>3</experiments>
</comment>
<comment type="interaction">
    <interactant intactId="EBI-10290827">
        <id>Q96LP2</id>
    </interactant>
    <interactant intactId="EBI-726876">
        <id>Q6NUQ1</id>
        <label>RINT1</label>
    </interactant>
    <organismsDiffer>false</organismsDiffer>
    <experiments>5</experiments>
</comment>
<comment type="interaction">
    <interactant intactId="EBI-10290827">
        <id>Q96LP2</id>
    </interactant>
    <interactant intactId="EBI-395959">
        <id>Q15287</id>
        <label>RNPS1</label>
    </interactant>
    <organismsDiffer>false</organismsDiffer>
    <experiments>3</experiments>
</comment>
<comment type="interaction">
    <interactant intactId="EBI-10290827">
        <id>Q96LP2</id>
    </interactant>
    <interactant intactId="EBI-625509">
        <id>Q8N720</id>
        <label>ZNF655</label>
    </interactant>
    <organismsDiffer>false</organismsDiffer>
    <experiments>3</experiments>
</comment>
<comment type="similarity">
    <text evidence="3">Belongs to the FAM81 family.</text>
</comment>
<comment type="caution">
    <text evidence="3">It is uncertain whether Met-1 or Met-39 is the initiator. Met-1 does not seem to exist in orthologs.</text>
</comment>
<comment type="sequence caution" evidence="3">
    <conflict type="erroneous initiation">
        <sequence resource="EMBL-CDS" id="AAH34772"/>
    </conflict>
    <text>Extended N-terminus.</text>
</comment>
<comment type="sequence caution" evidence="3">
    <conflict type="frameshift">
        <sequence resource="EMBL-CDS" id="BAB71646"/>
    </conflict>
</comment>
<organism>
    <name type="scientific">Homo sapiens</name>
    <name type="common">Human</name>
    <dbReference type="NCBI Taxonomy" id="9606"/>
    <lineage>
        <taxon>Eukaryota</taxon>
        <taxon>Metazoa</taxon>
        <taxon>Chordata</taxon>
        <taxon>Craniata</taxon>
        <taxon>Vertebrata</taxon>
        <taxon>Euteleostomi</taxon>
        <taxon>Mammalia</taxon>
        <taxon>Eutheria</taxon>
        <taxon>Euarchontoglires</taxon>
        <taxon>Primates</taxon>
        <taxon>Haplorrhini</taxon>
        <taxon>Catarrhini</taxon>
        <taxon>Hominidae</taxon>
        <taxon>Homo</taxon>
    </lineage>
</organism>
<keyword id="KW-0175">Coiled coil</keyword>
<keyword id="KW-1267">Proteomics identification</keyword>
<keyword id="KW-1185">Reference proteome</keyword>
<sequence>MQLQFLGTLASSEKRKKSQRLFFKNIKSTKNKAGKASIMSSDTNVNKSASPTATAEEQPVEPDGPLPGSDNNQEKKVRLSPAKMSTKNSTDLVEYVDKSHAFLPIIPNTQRGQLEDRLNNQARTIAFLLEQAFRIKEDISACLQGTHGFRKEESLARKLLESHIQTITSIVKKLSQNIEILEDQIRARDQAATGTNFAVHEINIKHLQGVGDLRGRVARCDSSIVKLSGDIHLFRQEHRQIEKAIQEFVPALETLSKNLDMKVMQLLGKIETASSEQTSNLKMVQGDYRHEMNLLEFKFHSLSSNLYEEVENNKKWTENQFLKYRKDHLGHINECLKVLQEKLEKSENKMEEKLLQLSSKVENFINTQKQETQLSKVKHMENKLSKKMEQMEKQIWGELETMQNEYQSGFKSIHDSLSSLQQIQKTKMDLEKYKVQKDLKKLQRKIVELQEV</sequence>